<comment type="function">
    <text evidence="3">Member of the two-component regulatory system WalK/WalR that regulates genes involved in cell wall metabolism, virulence regulation, biofilm production, oxidative stress resistance and antibiotic resistance via direct or indirect regulation of autolysins. Functions as a sensor protein kinase which is autophosphorylated at a histidine residue in the dimerization domain and transfers its phosphate group to the conserved aspartic acid residue in the regulatory domain of WalR. In turn, WalR binds to the upstream promoter regions of the target genes to positively and negatively regulate their expression.</text>
</comment>
<comment type="catalytic activity">
    <reaction evidence="3">
        <text>ATP + protein L-histidine = ADP + protein N-phospho-L-histidine.</text>
        <dbReference type="EC" id="2.7.13.3"/>
    </reaction>
</comment>
<comment type="activity regulation">
    <text evidence="3">By zinc. Zinc-binding negatively regulates WalK kinase activity and thus autophosphorylation.</text>
</comment>
<comment type="subunit">
    <text evidence="2">Forms homodimers. Forms homooligomers.</text>
</comment>
<comment type="subcellular location">
    <subcellularLocation>
        <location evidence="9">Cell membrane</location>
        <topology evidence="4">Multi-pass membrane protein</topology>
    </subcellularLocation>
</comment>
<comment type="PTM">
    <text evidence="3">Autophosphorylated.</text>
</comment>
<protein>
    <recommendedName>
        <fullName evidence="9">Sensor protein kinase WalK</fullName>
        <ecNumber evidence="1">2.7.13.3</ecNumber>
    </recommendedName>
</protein>
<proteinExistence type="inferred from homology"/>
<gene>
    <name type="primary">walK</name>
    <name type="ordered locus">SaurJH1_0019</name>
</gene>
<evidence type="ECO:0000250" key="1">
    <source>
        <dbReference type="UniProtKB" id="O34206"/>
    </source>
</evidence>
<evidence type="ECO:0000250" key="2">
    <source>
        <dbReference type="UniProtKB" id="Q2G2U4"/>
    </source>
</evidence>
<evidence type="ECO:0000250" key="3">
    <source>
        <dbReference type="UniProtKB" id="Q9RDT3"/>
    </source>
</evidence>
<evidence type="ECO:0000255" key="4"/>
<evidence type="ECO:0000255" key="5">
    <source>
        <dbReference type="PROSITE-ProRule" id="PRU00102"/>
    </source>
</evidence>
<evidence type="ECO:0000255" key="6">
    <source>
        <dbReference type="PROSITE-ProRule" id="PRU00107"/>
    </source>
</evidence>
<evidence type="ECO:0000255" key="7">
    <source>
        <dbReference type="PROSITE-ProRule" id="PRU00140"/>
    </source>
</evidence>
<evidence type="ECO:0000255" key="8">
    <source>
        <dbReference type="PROSITE-ProRule" id="PRU00141"/>
    </source>
</evidence>
<evidence type="ECO:0000305" key="9"/>
<name>WALK_STAA2</name>
<sequence length="608" mass="69924">MKWLKQLQSLHTKLVIVYVLLIIIGMQIIGLYFTNNLEKELLDNFKKNITQYAKQLEISIEKVYDEKGSVNAQKDIQNLLSEYANRQEIGEIRFIDKDQIIIATTKQSNRSLINQKANDSSVQKALSLGQSNDHLILKDYGGGKDRVWVYNIPVKVDKKVIGNIYIESKINDVYNQLNNINQIFIVGTAISLLITVILGFFIARTITKPITDMRNQTVEMSRGNYTQRVKIYGNDEIGELALAFNNLSKRVQEAQANTESEKRRLDSVITHMSDGIIATDRRGRIRIVNDMALKMLGMAKEDIIGYYMLSVLSLEDEFKLEEIQENNDSFLLDLNEEEGLIARVNFSTIVQETGFVTGYIAVLHDVTEQQQVERERREFVANVSHELRTPLTSMNSYIEALEEGAWKDEELAPQFLSVTREETERMIRLVNDLLQLSKMDNESDQINKEIIDFNMFINKIINRHEMSAKDTTFIRDIPKKTIFTEFDPDKMTQVFDNVITNAMKYSRGDKRVEFHVKQNPLYNRMTIRIKDNGIGIPINKVDKIFDRFYRVDKARTRKMGGTGLGLAISKEIVEAHNGRIWANSVEGQGTSIFITLPCEVIEDGDWDE</sequence>
<organism>
    <name type="scientific">Staphylococcus aureus (strain JH1)</name>
    <dbReference type="NCBI Taxonomy" id="359787"/>
    <lineage>
        <taxon>Bacteria</taxon>
        <taxon>Bacillati</taxon>
        <taxon>Bacillota</taxon>
        <taxon>Bacilli</taxon>
        <taxon>Bacillales</taxon>
        <taxon>Staphylococcaceae</taxon>
        <taxon>Staphylococcus</taxon>
    </lineage>
</organism>
<reference key="1">
    <citation type="submission" date="2007-06" db="EMBL/GenBank/DDBJ databases">
        <title>Complete sequence of chromosome of Staphylococcus aureus subsp. aureus JH1.</title>
        <authorList>
            <consortium name="US DOE Joint Genome Institute"/>
            <person name="Copeland A."/>
            <person name="Lucas S."/>
            <person name="Lapidus A."/>
            <person name="Barry K."/>
            <person name="Detter J.C."/>
            <person name="Glavina del Rio T."/>
            <person name="Hammon N."/>
            <person name="Israni S."/>
            <person name="Dalin E."/>
            <person name="Tice H."/>
            <person name="Pitluck S."/>
            <person name="Chain P."/>
            <person name="Malfatti S."/>
            <person name="Shin M."/>
            <person name="Vergez L."/>
            <person name="Schmutz J."/>
            <person name="Larimer F."/>
            <person name="Land M."/>
            <person name="Hauser L."/>
            <person name="Kyrpides N."/>
            <person name="Ivanova N."/>
            <person name="Tomasz A."/>
            <person name="Richardson P."/>
        </authorList>
    </citation>
    <scope>NUCLEOTIDE SEQUENCE [LARGE SCALE GENOMIC DNA]</scope>
    <source>
        <strain>JH1</strain>
    </source>
</reference>
<keyword id="KW-0067">ATP-binding</keyword>
<keyword id="KW-1003">Cell membrane</keyword>
<keyword id="KW-0418">Kinase</keyword>
<keyword id="KW-0472">Membrane</keyword>
<keyword id="KW-0479">Metal-binding</keyword>
<keyword id="KW-0547">Nucleotide-binding</keyword>
<keyword id="KW-0597">Phosphoprotein</keyword>
<keyword id="KW-0808">Transferase</keyword>
<keyword id="KW-0812">Transmembrane</keyword>
<keyword id="KW-1133">Transmembrane helix</keyword>
<keyword id="KW-0902">Two-component regulatory system</keyword>
<keyword id="KW-0862">Zinc</keyword>
<feature type="chain" id="PRO_0000353053" description="Sensor protein kinase WalK">
    <location>
        <begin position="1"/>
        <end position="608"/>
    </location>
</feature>
<feature type="transmembrane region" description="Helical" evidence="4">
    <location>
        <begin position="14"/>
        <end position="34"/>
    </location>
</feature>
<feature type="transmembrane region" description="Helical" evidence="4">
    <location>
        <begin position="183"/>
        <end position="203"/>
    </location>
</feature>
<feature type="domain" description="HAMP" evidence="5">
    <location>
        <begin position="204"/>
        <end position="256"/>
    </location>
</feature>
<feature type="domain" description="PAS" evidence="7">
    <location>
        <begin position="261"/>
        <end position="331"/>
    </location>
</feature>
<feature type="domain" description="PAC" evidence="8">
    <location>
        <begin position="314"/>
        <end position="378"/>
    </location>
</feature>
<feature type="domain" description="Histidine kinase" evidence="6">
    <location>
        <begin position="382"/>
        <end position="600"/>
    </location>
</feature>
<feature type="binding site" evidence="3">
    <location>
        <position position="271"/>
    </location>
    <ligand>
        <name>Zn(2+)</name>
        <dbReference type="ChEBI" id="CHEBI:29105"/>
    </ligand>
</feature>
<feature type="binding site" evidence="3">
    <location>
        <position position="274"/>
    </location>
    <ligand>
        <name>Zn(2+)</name>
        <dbReference type="ChEBI" id="CHEBI:29105"/>
    </ligand>
</feature>
<feature type="binding site" evidence="3">
    <location>
        <position position="364"/>
    </location>
    <ligand>
        <name>Zn(2+)</name>
        <dbReference type="ChEBI" id="CHEBI:29105"/>
    </ligand>
</feature>
<feature type="binding site" evidence="3">
    <location>
        <position position="368"/>
    </location>
    <ligand>
        <name>Zn(2+)</name>
        <dbReference type="ChEBI" id="CHEBI:29105"/>
    </ligand>
</feature>
<feature type="modified residue" description="Phosphohistidine; by autocatalysis" evidence="6">
    <location>
        <position position="385"/>
    </location>
</feature>
<dbReference type="EC" id="2.7.13.3" evidence="1"/>
<dbReference type="EMBL" id="CP000736">
    <property type="protein sequence ID" value="ABR50887.1"/>
    <property type="molecule type" value="Genomic_DNA"/>
</dbReference>
<dbReference type="SMR" id="A6TXG9"/>
<dbReference type="KEGG" id="sah:SaurJH1_0019"/>
<dbReference type="HOGENOM" id="CLU_000445_89_2_9"/>
<dbReference type="GO" id="GO:0005886">
    <property type="term" value="C:plasma membrane"/>
    <property type="evidence" value="ECO:0007669"/>
    <property type="project" value="UniProtKB-SubCell"/>
</dbReference>
<dbReference type="GO" id="GO:0005524">
    <property type="term" value="F:ATP binding"/>
    <property type="evidence" value="ECO:0007669"/>
    <property type="project" value="UniProtKB-KW"/>
</dbReference>
<dbReference type="GO" id="GO:0046872">
    <property type="term" value="F:metal ion binding"/>
    <property type="evidence" value="ECO:0007669"/>
    <property type="project" value="UniProtKB-KW"/>
</dbReference>
<dbReference type="GO" id="GO:0000156">
    <property type="term" value="F:phosphorelay response regulator activity"/>
    <property type="evidence" value="ECO:0007669"/>
    <property type="project" value="TreeGrafter"/>
</dbReference>
<dbReference type="GO" id="GO:0000155">
    <property type="term" value="F:phosphorelay sensor kinase activity"/>
    <property type="evidence" value="ECO:0007669"/>
    <property type="project" value="InterPro"/>
</dbReference>
<dbReference type="GO" id="GO:0030295">
    <property type="term" value="F:protein kinase activator activity"/>
    <property type="evidence" value="ECO:0007669"/>
    <property type="project" value="TreeGrafter"/>
</dbReference>
<dbReference type="GO" id="GO:0007234">
    <property type="term" value="P:osmosensory signaling via phosphorelay pathway"/>
    <property type="evidence" value="ECO:0007669"/>
    <property type="project" value="TreeGrafter"/>
</dbReference>
<dbReference type="CDD" id="cd06225">
    <property type="entry name" value="HAMP"/>
    <property type="match status" value="1"/>
</dbReference>
<dbReference type="CDD" id="cd00075">
    <property type="entry name" value="HATPase"/>
    <property type="match status" value="1"/>
</dbReference>
<dbReference type="CDD" id="cd00082">
    <property type="entry name" value="HisKA"/>
    <property type="match status" value="1"/>
</dbReference>
<dbReference type="CDD" id="cd00130">
    <property type="entry name" value="PAS"/>
    <property type="match status" value="1"/>
</dbReference>
<dbReference type="FunFam" id="1.10.8.500:FF:000001">
    <property type="entry name" value="Cell wall metabolism sensor histidine kinase"/>
    <property type="match status" value="1"/>
</dbReference>
<dbReference type="FunFam" id="3.30.450.20:FF:000037">
    <property type="entry name" value="Cell wall metabolism sensor histidine kinase"/>
    <property type="match status" value="1"/>
</dbReference>
<dbReference type="FunFam" id="3.30.565.10:FF:000006">
    <property type="entry name" value="Sensor histidine kinase WalK"/>
    <property type="match status" value="1"/>
</dbReference>
<dbReference type="FunFam" id="1.10.287.130:FF:000001">
    <property type="entry name" value="Two-component sensor histidine kinase"/>
    <property type="match status" value="1"/>
</dbReference>
<dbReference type="Gene3D" id="1.10.287.130">
    <property type="match status" value="1"/>
</dbReference>
<dbReference type="Gene3D" id="1.10.8.500">
    <property type="entry name" value="HAMP domain in histidine kinase"/>
    <property type="match status" value="1"/>
</dbReference>
<dbReference type="Gene3D" id="3.30.565.10">
    <property type="entry name" value="Histidine kinase-like ATPase, C-terminal domain"/>
    <property type="match status" value="1"/>
</dbReference>
<dbReference type="Gene3D" id="3.30.450.20">
    <property type="entry name" value="PAS domain"/>
    <property type="match status" value="2"/>
</dbReference>
<dbReference type="InterPro" id="IPR003660">
    <property type="entry name" value="HAMP_dom"/>
</dbReference>
<dbReference type="InterPro" id="IPR036890">
    <property type="entry name" value="HATPase_C_sf"/>
</dbReference>
<dbReference type="InterPro" id="IPR005467">
    <property type="entry name" value="His_kinase_dom"/>
</dbReference>
<dbReference type="InterPro" id="IPR003661">
    <property type="entry name" value="HisK_dim/P_dom"/>
</dbReference>
<dbReference type="InterPro" id="IPR036097">
    <property type="entry name" value="HisK_dim/P_sf"/>
</dbReference>
<dbReference type="InterPro" id="IPR052545">
    <property type="entry name" value="Light-responsive_reg"/>
</dbReference>
<dbReference type="InterPro" id="IPR000014">
    <property type="entry name" value="PAS"/>
</dbReference>
<dbReference type="InterPro" id="IPR000700">
    <property type="entry name" value="PAS-assoc_C"/>
</dbReference>
<dbReference type="InterPro" id="IPR035965">
    <property type="entry name" value="PAS-like_dom_sf"/>
</dbReference>
<dbReference type="InterPro" id="IPR049814">
    <property type="entry name" value="Resp_reg_WalK"/>
</dbReference>
<dbReference type="InterPro" id="IPR029151">
    <property type="entry name" value="Sensor-like_sf"/>
</dbReference>
<dbReference type="InterPro" id="IPR004358">
    <property type="entry name" value="Sig_transdc_His_kin-like_C"/>
</dbReference>
<dbReference type="NCBIfam" id="NF033092">
    <property type="entry name" value="HK_WalK"/>
    <property type="match status" value="1"/>
</dbReference>
<dbReference type="NCBIfam" id="TIGR00229">
    <property type="entry name" value="sensory_box"/>
    <property type="match status" value="1"/>
</dbReference>
<dbReference type="PANTHER" id="PTHR42878:SF7">
    <property type="entry name" value="SENSOR HISTIDINE KINASE GLRK"/>
    <property type="match status" value="1"/>
</dbReference>
<dbReference type="PANTHER" id="PTHR42878">
    <property type="entry name" value="TWO-COMPONENT HISTIDINE KINASE"/>
    <property type="match status" value="1"/>
</dbReference>
<dbReference type="Pfam" id="PF23846">
    <property type="entry name" value="Cache_WalK"/>
    <property type="match status" value="1"/>
</dbReference>
<dbReference type="Pfam" id="PF00672">
    <property type="entry name" value="HAMP"/>
    <property type="match status" value="1"/>
</dbReference>
<dbReference type="Pfam" id="PF02518">
    <property type="entry name" value="HATPase_c"/>
    <property type="match status" value="1"/>
</dbReference>
<dbReference type="Pfam" id="PF00512">
    <property type="entry name" value="HisKA"/>
    <property type="match status" value="1"/>
</dbReference>
<dbReference type="Pfam" id="PF13426">
    <property type="entry name" value="PAS_9"/>
    <property type="match status" value="1"/>
</dbReference>
<dbReference type="PRINTS" id="PR00344">
    <property type="entry name" value="BCTRLSENSOR"/>
</dbReference>
<dbReference type="SMART" id="SM00304">
    <property type="entry name" value="HAMP"/>
    <property type="match status" value="1"/>
</dbReference>
<dbReference type="SMART" id="SM00387">
    <property type="entry name" value="HATPase_c"/>
    <property type="match status" value="1"/>
</dbReference>
<dbReference type="SMART" id="SM00388">
    <property type="entry name" value="HisKA"/>
    <property type="match status" value="1"/>
</dbReference>
<dbReference type="SMART" id="SM00091">
    <property type="entry name" value="PAS"/>
    <property type="match status" value="1"/>
</dbReference>
<dbReference type="SUPFAM" id="SSF55874">
    <property type="entry name" value="ATPase domain of HSP90 chaperone/DNA topoisomerase II/histidine kinase"/>
    <property type="match status" value="1"/>
</dbReference>
<dbReference type="SUPFAM" id="SSF158472">
    <property type="entry name" value="HAMP domain-like"/>
    <property type="match status" value="1"/>
</dbReference>
<dbReference type="SUPFAM" id="SSF47384">
    <property type="entry name" value="Homodimeric domain of signal transducing histidine kinase"/>
    <property type="match status" value="1"/>
</dbReference>
<dbReference type="SUPFAM" id="SSF55785">
    <property type="entry name" value="PYP-like sensor domain (PAS domain)"/>
    <property type="match status" value="1"/>
</dbReference>
<dbReference type="SUPFAM" id="SSF103190">
    <property type="entry name" value="Sensory domain-like"/>
    <property type="match status" value="1"/>
</dbReference>
<dbReference type="PROSITE" id="PS50885">
    <property type="entry name" value="HAMP"/>
    <property type="match status" value="1"/>
</dbReference>
<dbReference type="PROSITE" id="PS50109">
    <property type="entry name" value="HIS_KIN"/>
    <property type="match status" value="1"/>
</dbReference>
<dbReference type="PROSITE" id="PS50113">
    <property type="entry name" value="PAC"/>
    <property type="match status" value="1"/>
</dbReference>
<dbReference type="PROSITE" id="PS50112">
    <property type="entry name" value="PAS"/>
    <property type="match status" value="1"/>
</dbReference>
<accession>A6TXG9</accession>